<dbReference type="EC" id="2.3.1.-"/>
<dbReference type="EMBL" id="AF027868">
    <property type="protein sequence ID" value="AAB84452.1"/>
    <property type="molecule type" value="Genomic_DNA"/>
</dbReference>
<dbReference type="EMBL" id="AL009126">
    <property type="protein sequence ID" value="CAB13761.1"/>
    <property type="molecule type" value="Genomic_DNA"/>
</dbReference>
<dbReference type="PIR" id="A69897">
    <property type="entry name" value="A69897"/>
</dbReference>
<dbReference type="RefSeq" id="NP_389750.1">
    <property type="nucleotide sequence ID" value="NC_000964.3"/>
</dbReference>
<dbReference type="RefSeq" id="WP_009967391.1">
    <property type="nucleotide sequence ID" value="NZ_OZ025638.1"/>
</dbReference>
<dbReference type="FunCoup" id="O34983">
    <property type="interactions" value="6"/>
</dbReference>
<dbReference type="STRING" id="224308.BSU18690"/>
<dbReference type="PaxDb" id="224308-BSU18690"/>
<dbReference type="EnsemblBacteria" id="CAB13761">
    <property type="protein sequence ID" value="CAB13761"/>
    <property type="gene ID" value="BSU_18690"/>
</dbReference>
<dbReference type="GeneID" id="939512"/>
<dbReference type="KEGG" id="bsu:BSU18690"/>
<dbReference type="PATRIC" id="fig|224308.179.peg.2038"/>
<dbReference type="eggNOG" id="COG0456">
    <property type="taxonomic scope" value="Bacteria"/>
</dbReference>
<dbReference type="InParanoid" id="O34983"/>
<dbReference type="OrthoDB" id="3172674at2"/>
<dbReference type="BioCyc" id="BSUB:BSU18690-MONOMER"/>
<dbReference type="Proteomes" id="UP000001570">
    <property type="component" value="Chromosome"/>
</dbReference>
<dbReference type="GO" id="GO:0016747">
    <property type="term" value="F:acyltransferase activity, transferring groups other than amino-acyl groups"/>
    <property type="evidence" value="ECO:0007669"/>
    <property type="project" value="InterPro"/>
</dbReference>
<dbReference type="CDD" id="cd04301">
    <property type="entry name" value="NAT_SF"/>
    <property type="match status" value="1"/>
</dbReference>
<dbReference type="Gene3D" id="3.40.630.30">
    <property type="match status" value="1"/>
</dbReference>
<dbReference type="InterPro" id="IPR016181">
    <property type="entry name" value="Acyl_CoA_acyltransferase"/>
</dbReference>
<dbReference type="InterPro" id="IPR000182">
    <property type="entry name" value="GNAT_dom"/>
</dbReference>
<dbReference type="InterPro" id="IPR036249">
    <property type="entry name" value="Thioredoxin-like_sf"/>
</dbReference>
<dbReference type="InterPro" id="IPR025685">
    <property type="entry name" value="YoaP-like_dom"/>
</dbReference>
<dbReference type="Pfam" id="PF00583">
    <property type="entry name" value="Acetyltransf_1"/>
    <property type="match status" value="1"/>
</dbReference>
<dbReference type="Pfam" id="PF14268">
    <property type="entry name" value="YoaP"/>
    <property type="match status" value="1"/>
</dbReference>
<dbReference type="SUPFAM" id="SSF55729">
    <property type="entry name" value="Acyl-CoA N-acyltransferases (Nat)"/>
    <property type="match status" value="1"/>
</dbReference>
<dbReference type="SUPFAM" id="SSF52833">
    <property type="entry name" value="Thioredoxin-like"/>
    <property type="match status" value="1"/>
</dbReference>
<dbReference type="PROSITE" id="PS51186">
    <property type="entry name" value="GNAT"/>
    <property type="match status" value="1"/>
</dbReference>
<protein>
    <recommendedName>
        <fullName>Uncharacterized N-acetyltransferase YoaP</fullName>
        <ecNumber>2.3.1.-</ecNumber>
    </recommendedName>
</protein>
<gene>
    <name type="primary">yoaP</name>
    <name type="ordered locus">BSU18690</name>
</gene>
<comment type="similarity">
    <text evidence="2">Belongs to the acetyltransferase family.</text>
</comment>
<accession>O34983</accession>
<accession>Q796F2</accession>
<feature type="chain" id="PRO_0000388803" description="Uncharacterized N-acetyltransferase YoaP">
    <location>
        <begin position="1"/>
        <end position="251"/>
    </location>
</feature>
<feature type="domain" description="N-acetyltransferase" evidence="1">
    <location>
        <begin position="4"/>
        <end position="152"/>
    </location>
</feature>
<reference key="1">
    <citation type="submission" date="1997-11" db="EMBL/GenBank/DDBJ databases">
        <title>Sequence analysis of the Bacillus subtilis chromosome region between the terC and odhAB loci cloned in a yeast artificial chromosome.</title>
        <authorList>
            <person name="Lapidus A."/>
            <person name="Galleron N."/>
            <person name="Sorokin A."/>
            <person name="Ehrlich S.D."/>
        </authorList>
    </citation>
    <scope>NUCLEOTIDE SEQUENCE [GENOMIC DNA]</scope>
</reference>
<reference key="2">
    <citation type="journal article" date="1997" name="Nature">
        <title>The complete genome sequence of the Gram-positive bacterium Bacillus subtilis.</title>
        <authorList>
            <person name="Kunst F."/>
            <person name="Ogasawara N."/>
            <person name="Moszer I."/>
            <person name="Albertini A.M."/>
            <person name="Alloni G."/>
            <person name="Azevedo V."/>
            <person name="Bertero M.G."/>
            <person name="Bessieres P."/>
            <person name="Bolotin A."/>
            <person name="Borchert S."/>
            <person name="Borriss R."/>
            <person name="Boursier L."/>
            <person name="Brans A."/>
            <person name="Braun M."/>
            <person name="Brignell S.C."/>
            <person name="Bron S."/>
            <person name="Brouillet S."/>
            <person name="Bruschi C.V."/>
            <person name="Caldwell B."/>
            <person name="Capuano V."/>
            <person name="Carter N.M."/>
            <person name="Choi S.-K."/>
            <person name="Codani J.-J."/>
            <person name="Connerton I.F."/>
            <person name="Cummings N.J."/>
            <person name="Daniel R.A."/>
            <person name="Denizot F."/>
            <person name="Devine K.M."/>
            <person name="Duesterhoeft A."/>
            <person name="Ehrlich S.D."/>
            <person name="Emmerson P.T."/>
            <person name="Entian K.-D."/>
            <person name="Errington J."/>
            <person name="Fabret C."/>
            <person name="Ferrari E."/>
            <person name="Foulger D."/>
            <person name="Fritz C."/>
            <person name="Fujita M."/>
            <person name="Fujita Y."/>
            <person name="Fuma S."/>
            <person name="Galizzi A."/>
            <person name="Galleron N."/>
            <person name="Ghim S.-Y."/>
            <person name="Glaser P."/>
            <person name="Goffeau A."/>
            <person name="Golightly E.J."/>
            <person name="Grandi G."/>
            <person name="Guiseppi G."/>
            <person name="Guy B.J."/>
            <person name="Haga K."/>
            <person name="Haiech J."/>
            <person name="Harwood C.R."/>
            <person name="Henaut A."/>
            <person name="Hilbert H."/>
            <person name="Holsappel S."/>
            <person name="Hosono S."/>
            <person name="Hullo M.-F."/>
            <person name="Itaya M."/>
            <person name="Jones L.-M."/>
            <person name="Joris B."/>
            <person name="Karamata D."/>
            <person name="Kasahara Y."/>
            <person name="Klaerr-Blanchard M."/>
            <person name="Klein C."/>
            <person name="Kobayashi Y."/>
            <person name="Koetter P."/>
            <person name="Koningstein G."/>
            <person name="Krogh S."/>
            <person name="Kumano M."/>
            <person name="Kurita K."/>
            <person name="Lapidus A."/>
            <person name="Lardinois S."/>
            <person name="Lauber J."/>
            <person name="Lazarevic V."/>
            <person name="Lee S.-M."/>
            <person name="Levine A."/>
            <person name="Liu H."/>
            <person name="Masuda S."/>
            <person name="Mauel C."/>
            <person name="Medigue C."/>
            <person name="Medina N."/>
            <person name="Mellado R.P."/>
            <person name="Mizuno M."/>
            <person name="Moestl D."/>
            <person name="Nakai S."/>
            <person name="Noback M."/>
            <person name="Noone D."/>
            <person name="O'Reilly M."/>
            <person name="Ogawa K."/>
            <person name="Ogiwara A."/>
            <person name="Oudega B."/>
            <person name="Park S.-H."/>
            <person name="Parro V."/>
            <person name="Pohl T.M."/>
            <person name="Portetelle D."/>
            <person name="Porwollik S."/>
            <person name="Prescott A.M."/>
            <person name="Presecan E."/>
            <person name="Pujic P."/>
            <person name="Purnelle B."/>
            <person name="Rapoport G."/>
            <person name="Rey M."/>
            <person name="Reynolds S."/>
            <person name="Rieger M."/>
            <person name="Rivolta C."/>
            <person name="Rocha E."/>
            <person name="Roche B."/>
            <person name="Rose M."/>
            <person name="Sadaie Y."/>
            <person name="Sato T."/>
            <person name="Scanlan E."/>
            <person name="Schleich S."/>
            <person name="Schroeter R."/>
            <person name="Scoffone F."/>
            <person name="Sekiguchi J."/>
            <person name="Sekowska A."/>
            <person name="Seror S.J."/>
            <person name="Serror P."/>
            <person name="Shin B.-S."/>
            <person name="Soldo B."/>
            <person name="Sorokin A."/>
            <person name="Tacconi E."/>
            <person name="Takagi T."/>
            <person name="Takahashi H."/>
            <person name="Takemaru K."/>
            <person name="Takeuchi M."/>
            <person name="Tamakoshi A."/>
            <person name="Tanaka T."/>
            <person name="Terpstra P."/>
            <person name="Tognoni A."/>
            <person name="Tosato V."/>
            <person name="Uchiyama S."/>
            <person name="Vandenbol M."/>
            <person name="Vannier F."/>
            <person name="Vassarotti A."/>
            <person name="Viari A."/>
            <person name="Wambutt R."/>
            <person name="Wedler E."/>
            <person name="Wedler H."/>
            <person name="Weitzenegger T."/>
            <person name="Winters P."/>
            <person name="Wipat A."/>
            <person name="Yamamoto H."/>
            <person name="Yamane K."/>
            <person name="Yasumoto K."/>
            <person name="Yata K."/>
            <person name="Yoshida K."/>
            <person name="Yoshikawa H.-F."/>
            <person name="Zumstein E."/>
            <person name="Yoshikawa H."/>
            <person name="Danchin A."/>
        </authorList>
    </citation>
    <scope>NUCLEOTIDE SEQUENCE [LARGE SCALE GENOMIC DNA]</scope>
    <source>
        <strain>168</strain>
    </source>
</reference>
<organism>
    <name type="scientific">Bacillus subtilis (strain 168)</name>
    <dbReference type="NCBI Taxonomy" id="224308"/>
    <lineage>
        <taxon>Bacteria</taxon>
        <taxon>Bacillati</taxon>
        <taxon>Bacillota</taxon>
        <taxon>Bacilli</taxon>
        <taxon>Bacillales</taxon>
        <taxon>Bacillaceae</taxon>
        <taxon>Bacillus</taxon>
    </lineage>
</organism>
<proteinExistence type="inferred from homology"/>
<keyword id="KW-0012">Acyltransferase</keyword>
<keyword id="KW-1185">Reference proteome</keyword>
<keyword id="KW-0808">Transferase</keyword>
<evidence type="ECO:0000255" key="1">
    <source>
        <dbReference type="PROSITE-ProRule" id="PRU00532"/>
    </source>
</evidence>
<evidence type="ECO:0000305" key="2"/>
<name>YOAP_BACSU</name>
<sequence>MCYIEITKDNIEDNHICCALSTKQYEHAVNEKKRWLKARMDEGLVFYRLHERAKVFIEYLPANEAWVPINAPNFMYINCLWVSGRYKNNGHAKRLLDKCIADAKACGMDGIIHIAGKKKLPYLSDKHFFEHMGFTLQDEAAPYFQLMALTWNGLADSPAFKSQVKSDSINEKGITIYYTAQCPFAVGMINDLRELTEKKGVQFQSIQLSSKEEAQKSPAIWTTFSVFFDGRFVTHEIMSINKFEKLLNTLA</sequence>